<gene>
    <name evidence="6" type="primary">Calcrl</name>
    <name type="synonym">Crlr</name>
</gene>
<feature type="signal peptide" evidence="2">
    <location>
        <begin position="1"/>
        <end position="22"/>
    </location>
</feature>
<feature type="chain" id="PRO_0000012812" description="Calcitonin gene-related peptide type 1 receptor">
    <location>
        <begin position="23"/>
        <end position="463"/>
    </location>
</feature>
<feature type="topological domain" description="Extracellular" evidence="5">
    <location>
        <begin position="23"/>
        <end position="138"/>
    </location>
</feature>
<feature type="transmembrane region" description="Helical; Name=1" evidence="1">
    <location>
        <begin position="139"/>
        <end position="163"/>
    </location>
</feature>
<feature type="topological domain" description="Cytoplasmic" evidence="5">
    <location>
        <begin position="164"/>
        <end position="174"/>
    </location>
</feature>
<feature type="transmembrane region" description="Helical; Name=2" evidence="1">
    <location>
        <begin position="175"/>
        <end position="197"/>
    </location>
</feature>
<feature type="topological domain" description="Extracellular" evidence="5">
    <location>
        <begin position="198"/>
        <end position="208"/>
    </location>
</feature>
<feature type="transmembrane region" description="Helical; Name=3" evidence="1">
    <location>
        <begin position="209"/>
        <end position="237"/>
    </location>
</feature>
<feature type="topological domain" description="Cytoplasmic" evidence="5">
    <location>
        <begin position="238"/>
        <end position="251"/>
    </location>
</feature>
<feature type="transmembrane region" description="Helical; Name=4" evidence="1">
    <location>
        <begin position="252"/>
        <end position="272"/>
    </location>
</feature>
<feature type="topological domain" description="Extracellular" evidence="5">
    <location>
        <begin position="273"/>
        <end position="288"/>
    </location>
</feature>
<feature type="transmembrane region" description="Helical; Name=5" evidence="1">
    <location>
        <begin position="289"/>
        <end position="313"/>
    </location>
</feature>
<feature type="topological domain" description="Cytoplasmic" evidence="5">
    <location>
        <begin position="314"/>
        <end position="328"/>
    </location>
</feature>
<feature type="transmembrane region" description="Helical; Name=6" evidence="1">
    <location>
        <begin position="329"/>
        <end position="350"/>
    </location>
</feature>
<feature type="topological domain" description="Extracellular" evidence="5">
    <location>
        <begin position="351"/>
        <end position="365"/>
    </location>
</feature>
<feature type="transmembrane region" description="Helical; Name=7" evidence="1">
    <location>
        <begin position="366"/>
        <end position="386"/>
    </location>
</feature>
<feature type="topological domain" description="Cytoplasmic" evidence="5">
    <location>
        <begin position="387"/>
        <end position="463"/>
    </location>
</feature>
<feature type="region of interest" description="Required for RAMP3 interaction" evidence="1">
    <location>
        <begin position="287"/>
        <end position="288"/>
    </location>
</feature>
<feature type="site" description="Required for ADM interaction" evidence="1">
    <location>
        <position position="201"/>
    </location>
</feature>
<feature type="site" description="Required for RAMP3 interaction" evidence="1">
    <location>
        <position position="249"/>
    </location>
</feature>
<feature type="site" description="Required for ADM2 interaction" evidence="1">
    <location>
        <position position="285"/>
    </location>
</feature>
<feature type="site" description="Required for RAMP2 interaction" evidence="1">
    <location>
        <position position="287"/>
    </location>
</feature>
<feature type="site" description="Required for ADM2 interaction" evidence="1">
    <location>
        <position position="294"/>
    </location>
</feature>
<feature type="site" description="Required for ADM2 interaction" evidence="1">
    <location>
        <position position="353"/>
    </location>
</feature>
<feature type="site" description="Required for ADM interaction" evidence="1">
    <location>
        <position position="372"/>
    </location>
</feature>
<feature type="modified residue" description="Phosphoserine" evidence="7">
    <location>
        <position position="419"/>
    </location>
</feature>
<feature type="modified residue" description="Phosphoserine" evidence="7">
    <location>
        <position position="444"/>
    </location>
</feature>
<feature type="glycosylation site" description="N-linked (GlcNAc...) asparagine" evidence="2">
    <location>
        <position position="29"/>
    </location>
</feature>
<feature type="glycosylation site" description="N-linked (GlcNAc...) asparagine" evidence="2">
    <location>
        <position position="65"/>
    </location>
</feature>
<feature type="glycosylation site" description="N-linked (GlcNAc...) asparagine" evidence="2">
    <location>
        <position position="117"/>
    </location>
</feature>
<feature type="glycosylation site" description="N-linked (GlcNAc...) asparagine" evidence="2">
    <location>
        <position position="122"/>
    </location>
</feature>
<feature type="glycosylation site" description="N-linked (GlcNAc...) asparagine" evidence="2">
    <location>
        <position position="127"/>
    </location>
</feature>
<feature type="glycosylation site" description="N-linked (GlcNAc...) asparagine" evidence="2">
    <location>
        <position position="128"/>
    </location>
</feature>
<feature type="disulfide bond" evidence="1">
    <location>
        <begin position="47"/>
        <end position="73"/>
    </location>
</feature>
<feature type="disulfide bond" evidence="1">
    <location>
        <begin position="64"/>
        <end position="104"/>
    </location>
</feature>
<feature type="disulfide bond" evidence="1">
    <location>
        <begin position="87"/>
        <end position="126"/>
    </location>
</feature>
<feature type="sequence conflict" description="In Ref. 1; BAA76492." evidence="5" ref="1">
    <original>Y</original>
    <variation>C</variation>
    <location>
        <position position="235"/>
    </location>
</feature>
<feature type="sequence conflict" description="In Ref. 2; AAD35021." evidence="5" ref="2">
    <original>M</original>
    <variation>T</variation>
    <location>
        <position position="458"/>
    </location>
</feature>
<evidence type="ECO:0000250" key="1">
    <source>
        <dbReference type="UniProtKB" id="Q16602"/>
    </source>
</evidence>
<evidence type="ECO:0000255" key="2"/>
<evidence type="ECO:0000269" key="3">
    <source>
    </source>
</evidence>
<evidence type="ECO:0000269" key="4">
    <source>
    </source>
</evidence>
<evidence type="ECO:0000305" key="5"/>
<evidence type="ECO:0000312" key="6">
    <source>
        <dbReference type="MGI" id="MGI:1926944"/>
    </source>
</evidence>
<evidence type="ECO:0007744" key="7">
    <source>
    </source>
</evidence>
<dbReference type="EMBL" id="AB015595">
    <property type="protein sequence ID" value="BAA76492.1"/>
    <property type="molecule type" value="mRNA"/>
</dbReference>
<dbReference type="EMBL" id="AF146525">
    <property type="protein sequence ID" value="AAD35021.1"/>
    <property type="molecule type" value="mRNA"/>
</dbReference>
<dbReference type="EMBL" id="AF209905">
    <property type="protein sequence ID" value="AAF21037.1"/>
    <property type="molecule type" value="mRNA"/>
</dbReference>
<dbReference type="CCDS" id="CCDS16184.1"/>
<dbReference type="RefSeq" id="NP_061252.2">
    <property type="nucleotide sequence ID" value="NM_018782.2"/>
</dbReference>
<dbReference type="RefSeq" id="XP_006499981.1">
    <property type="nucleotide sequence ID" value="XM_006499918.5"/>
</dbReference>
<dbReference type="RefSeq" id="XP_036018296.1">
    <property type="nucleotide sequence ID" value="XM_036162403.1"/>
</dbReference>
<dbReference type="SMR" id="Q9R1W5"/>
<dbReference type="BioGRID" id="207679">
    <property type="interactions" value="1"/>
</dbReference>
<dbReference type="ComplexPortal" id="CPX-3149">
    <property type="entry name" value="CGRP receptor complex"/>
</dbReference>
<dbReference type="ComplexPortal" id="CPX-3150">
    <property type="entry name" value="Adrenomedullin receptor AM1 complex"/>
</dbReference>
<dbReference type="ComplexPortal" id="CPX-3151">
    <property type="entry name" value="Adrenomedullin receptor AM2 complex"/>
</dbReference>
<dbReference type="CORUM" id="Q9R1W5"/>
<dbReference type="FunCoup" id="Q9R1W5">
    <property type="interactions" value="1106"/>
</dbReference>
<dbReference type="STRING" id="10090.ENSMUSP00000073875"/>
<dbReference type="BindingDB" id="Q9R1W5"/>
<dbReference type="ChEMBL" id="CHEMBL2034811"/>
<dbReference type="GuidetoPHARMACOLOGY" id="47"/>
<dbReference type="GlyCosmos" id="Q9R1W5">
    <property type="glycosylation" value="6 sites, No reported glycans"/>
</dbReference>
<dbReference type="GlyGen" id="Q9R1W5">
    <property type="glycosylation" value="6 sites, 3 N-linked glycans (4 sites)"/>
</dbReference>
<dbReference type="iPTMnet" id="Q9R1W5"/>
<dbReference type="PhosphoSitePlus" id="Q9R1W5"/>
<dbReference type="PaxDb" id="10090-ENSMUSP00000073875"/>
<dbReference type="ProteomicsDB" id="265511"/>
<dbReference type="Antibodypedia" id="1959">
    <property type="antibodies" value="280 antibodies from 33 providers"/>
</dbReference>
<dbReference type="DNASU" id="54598"/>
<dbReference type="Ensembl" id="ENSMUST00000074262.9">
    <property type="protein sequence ID" value="ENSMUSP00000073875.3"/>
    <property type="gene ID" value="ENSMUSG00000059588.15"/>
</dbReference>
<dbReference type="GeneID" id="54598"/>
<dbReference type="KEGG" id="mmu:54598"/>
<dbReference type="UCSC" id="uc008kii.3">
    <property type="organism name" value="mouse"/>
</dbReference>
<dbReference type="AGR" id="MGI:1926944"/>
<dbReference type="CTD" id="10203"/>
<dbReference type="MGI" id="MGI:1926944">
    <property type="gene designation" value="Calcrl"/>
</dbReference>
<dbReference type="VEuPathDB" id="HostDB:ENSMUSG00000059588"/>
<dbReference type="eggNOG" id="KOG4564">
    <property type="taxonomic scope" value="Eukaryota"/>
</dbReference>
<dbReference type="GeneTree" id="ENSGT00940000159898"/>
<dbReference type="HOGENOM" id="CLU_002753_4_2_1"/>
<dbReference type="InParanoid" id="Q9R1W5"/>
<dbReference type="OMA" id="LHMNLFS"/>
<dbReference type="OrthoDB" id="16753at2759"/>
<dbReference type="PhylomeDB" id="Q9R1W5"/>
<dbReference type="TreeFam" id="TF315710"/>
<dbReference type="Reactome" id="R-MMU-418555">
    <property type="pathway name" value="G alpha (s) signalling events"/>
</dbReference>
<dbReference type="Reactome" id="R-MMU-419812">
    <property type="pathway name" value="Calcitonin-like ligand receptors"/>
</dbReference>
<dbReference type="Reactome" id="R-MMU-9856530">
    <property type="pathway name" value="High laminar flow shear stress activates signaling by PIEZO1 and PECAM1:CDH5:KDR in endothelial cells"/>
</dbReference>
<dbReference type="BioGRID-ORCS" id="54598">
    <property type="hits" value="2 hits in 78 CRISPR screens"/>
</dbReference>
<dbReference type="ChiTaRS" id="Calcrl">
    <property type="organism name" value="mouse"/>
</dbReference>
<dbReference type="PRO" id="PR:Q9R1W5"/>
<dbReference type="Proteomes" id="UP000000589">
    <property type="component" value="Chromosome 2"/>
</dbReference>
<dbReference type="RNAct" id="Q9R1W5">
    <property type="molecule type" value="protein"/>
</dbReference>
<dbReference type="Bgee" id="ENSMUSG00000059588">
    <property type="expression patterns" value="Expressed in left lung lobe and 229 other cell types or tissues"/>
</dbReference>
<dbReference type="ExpressionAtlas" id="Q9R1W5">
    <property type="expression patterns" value="baseline and differential"/>
</dbReference>
<dbReference type="GO" id="GO:1903143">
    <property type="term" value="C:adrenomedullin receptor complex"/>
    <property type="evidence" value="ECO:0000266"/>
    <property type="project" value="ComplexPortal"/>
</dbReference>
<dbReference type="GO" id="GO:1990406">
    <property type="term" value="C:CGRP receptor complex"/>
    <property type="evidence" value="ECO:0007669"/>
    <property type="project" value="Ensembl"/>
</dbReference>
<dbReference type="GO" id="GO:0005783">
    <property type="term" value="C:endoplasmic reticulum"/>
    <property type="evidence" value="ECO:0007669"/>
    <property type="project" value="Ensembl"/>
</dbReference>
<dbReference type="GO" id="GO:0005768">
    <property type="term" value="C:endosome"/>
    <property type="evidence" value="ECO:0007669"/>
    <property type="project" value="Ensembl"/>
</dbReference>
<dbReference type="GO" id="GO:0005764">
    <property type="term" value="C:lysosome"/>
    <property type="evidence" value="ECO:0007669"/>
    <property type="project" value="Ensembl"/>
</dbReference>
<dbReference type="GO" id="GO:1990409">
    <property type="term" value="F:adrenomedullin binding"/>
    <property type="evidence" value="ECO:0007669"/>
    <property type="project" value="Ensembl"/>
</dbReference>
<dbReference type="GO" id="GO:0001605">
    <property type="term" value="F:adrenomedullin receptor activity"/>
    <property type="evidence" value="ECO:0007669"/>
    <property type="project" value="Ensembl"/>
</dbReference>
<dbReference type="GO" id="GO:0001635">
    <property type="term" value="F:calcitonin gene-related peptide receptor activity"/>
    <property type="evidence" value="ECO:0000316"/>
    <property type="project" value="MGI"/>
</dbReference>
<dbReference type="GO" id="GO:0004948">
    <property type="term" value="F:calcitonin receptor activity"/>
    <property type="evidence" value="ECO:0007669"/>
    <property type="project" value="InterPro"/>
</dbReference>
<dbReference type="GO" id="GO:0007189">
    <property type="term" value="P:adenylate cyclase-activating G protein-coupled receptor signaling pathway"/>
    <property type="evidence" value="ECO:0000315"/>
    <property type="project" value="MGI"/>
</dbReference>
<dbReference type="GO" id="GO:1990410">
    <property type="term" value="P:adrenomedullin receptor signaling pathway"/>
    <property type="evidence" value="ECO:0000303"/>
    <property type="project" value="ComplexPortal"/>
</dbReference>
<dbReference type="GO" id="GO:0001525">
    <property type="term" value="P:angiogenesis"/>
    <property type="evidence" value="ECO:0007669"/>
    <property type="project" value="Ensembl"/>
</dbReference>
<dbReference type="GO" id="GO:1990408">
    <property type="term" value="P:calcitonin gene-related peptide receptor signaling pathway"/>
    <property type="evidence" value="ECO:0007669"/>
    <property type="project" value="Ensembl"/>
</dbReference>
<dbReference type="GO" id="GO:0006816">
    <property type="term" value="P:calcium ion transport"/>
    <property type="evidence" value="ECO:0007669"/>
    <property type="project" value="Ensembl"/>
</dbReference>
<dbReference type="GO" id="GO:0008283">
    <property type="term" value="P:cell population proliferation"/>
    <property type="evidence" value="ECO:0000315"/>
    <property type="project" value="MGI"/>
</dbReference>
<dbReference type="GO" id="GO:0007166">
    <property type="term" value="P:cell surface receptor signaling pathway"/>
    <property type="evidence" value="ECO:0007669"/>
    <property type="project" value="InterPro"/>
</dbReference>
<dbReference type="GO" id="GO:0071329">
    <property type="term" value="P:cellular response to sucrose stimulus"/>
    <property type="evidence" value="ECO:0007669"/>
    <property type="project" value="Ensembl"/>
</dbReference>
<dbReference type="GO" id="GO:0007186">
    <property type="term" value="P:G protein-coupled receptor signaling pathway"/>
    <property type="evidence" value="ECO:0000304"/>
    <property type="project" value="MGI"/>
</dbReference>
<dbReference type="GO" id="GO:0007507">
    <property type="term" value="P:heart development"/>
    <property type="evidence" value="ECO:0000315"/>
    <property type="project" value="MGI"/>
</dbReference>
<dbReference type="GO" id="GO:0008284">
    <property type="term" value="P:positive regulation of cell population proliferation"/>
    <property type="evidence" value="ECO:0000315"/>
    <property type="project" value="MGI"/>
</dbReference>
<dbReference type="GO" id="GO:1904707">
    <property type="term" value="P:positive regulation of vascular associated smooth muscle cell proliferation"/>
    <property type="evidence" value="ECO:0000315"/>
    <property type="project" value="MGI"/>
</dbReference>
<dbReference type="GO" id="GO:0015031">
    <property type="term" value="P:protein transport"/>
    <property type="evidence" value="ECO:0007669"/>
    <property type="project" value="Ensembl"/>
</dbReference>
<dbReference type="GO" id="GO:0031623">
    <property type="term" value="P:receptor internalization"/>
    <property type="evidence" value="ECO:0007669"/>
    <property type="project" value="Ensembl"/>
</dbReference>
<dbReference type="GO" id="GO:0048659">
    <property type="term" value="P:smooth muscle cell proliferation"/>
    <property type="evidence" value="ECO:0000315"/>
    <property type="project" value="MGI"/>
</dbReference>
<dbReference type="GO" id="GO:1990874">
    <property type="term" value="P:vascular associated smooth muscle cell proliferation"/>
    <property type="evidence" value="ECO:0000315"/>
    <property type="project" value="MGI"/>
</dbReference>
<dbReference type="CDD" id="cd15274">
    <property type="entry name" value="7tmB1_calcitonin_R"/>
    <property type="match status" value="1"/>
</dbReference>
<dbReference type="FunFam" id="1.20.1070.10:FF:000079">
    <property type="entry name" value="Calcitonin gene-related peptide type 1 receptor"/>
    <property type="match status" value="1"/>
</dbReference>
<dbReference type="FunFam" id="4.10.1240.10:FF:000011">
    <property type="entry name" value="Calcitonin gene-related peptide type 1 receptor"/>
    <property type="match status" value="1"/>
</dbReference>
<dbReference type="Gene3D" id="4.10.1240.10">
    <property type="entry name" value="GPCR, family 2, extracellular hormone receptor domain"/>
    <property type="match status" value="1"/>
</dbReference>
<dbReference type="Gene3D" id="1.20.1070.10">
    <property type="entry name" value="Rhodopsin 7-helix transmembrane proteins"/>
    <property type="match status" value="1"/>
</dbReference>
<dbReference type="InterPro" id="IPR050332">
    <property type="entry name" value="GPCR_2"/>
</dbReference>
<dbReference type="InterPro" id="IPR017981">
    <property type="entry name" value="GPCR_2-like_7TM"/>
</dbReference>
<dbReference type="InterPro" id="IPR003287">
    <property type="entry name" value="GPCR_2_calcitonin_rcpt_fam"/>
</dbReference>
<dbReference type="InterPro" id="IPR003289">
    <property type="entry name" value="GPCR_2_CGRP1_rcpt"/>
</dbReference>
<dbReference type="InterPro" id="IPR036445">
    <property type="entry name" value="GPCR_2_extracell_dom_sf"/>
</dbReference>
<dbReference type="InterPro" id="IPR001879">
    <property type="entry name" value="GPCR_2_extracellular_dom"/>
</dbReference>
<dbReference type="InterPro" id="IPR000832">
    <property type="entry name" value="GPCR_2_secretin-like"/>
</dbReference>
<dbReference type="InterPro" id="IPR017983">
    <property type="entry name" value="GPCR_2_secretin-like_CS"/>
</dbReference>
<dbReference type="PANTHER" id="PTHR45620:SF21">
    <property type="entry name" value="CALCITONIN GENE-RELATED PEPTIDE TYPE 1 RECEPTOR"/>
    <property type="match status" value="1"/>
</dbReference>
<dbReference type="PANTHER" id="PTHR45620">
    <property type="entry name" value="PDF RECEPTOR-LIKE PROTEIN-RELATED"/>
    <property type="match status" value="1"/>
</dbReference>
<dbReference type="Pfam" id="PF00002">
    <property type="entry name" value="7tm_2"/>
    <property type="match status" value="1"/>
</dbReference>
<dbReference type="Pfam" id="PF02793">
    <property type="entry name" value="HRM"/>
    <property type="match status" value="1"/>
</dbReference>
<dbReference type="PRINTS" id="PR01351">
    <property type="entry name" value="CGRPRECEPTOR"/>
</dbReference>
<dbReference type="PRINTS" id="PR01350">
    <property type="entry name" value="CTRFAMILY"/>
</dbReference>
<dbReference type="PRINTS" id="PR00249">
    <property type="entry name" value="GPCRSECRETIN"/>
</dbReference>
<dbReference type="SMART" id="SM00008">
    <property type="entry name" value="HormR"/>
    <property type="match status" value="1"/>
</dbReference>
<dbReference type="SUPFAM" id="SSF81321">
    <property type="entry name" value="Family A G protein-coupled receptor-like"/>
    <property type="match status" value="1"/>
</dbReference>
<dbReference type="SUPFAM" id="SSF111418">
    <property type="entry name" value="Hormone receptor domain"/>
    <property type="match status" value="1"/>
</dbReference>
<dbReference type="PROSITE" id="PS00649">
    <property type="entry name" value="G_PROTEIN_RECEP_F2_1"/>
    <property type="match status" value="1"/>
</dbReference>
<dbReference type="PROSITE" id="PS00650">
    <property type="entry name" value="G_PROTEIN_RECEP_F2_2"/>
    <property type="match status" value="1"/>
</dbReference>
<dbReference type="PROSITE" id="PS50227">
    <property type="entry name" value="G_PROTEIN_RECEP_F2_3"/>
    <property type="match status" value="1"/>
</dbReference>
<dbReference type="PROSITE" id="PS50261">
    <property type="entry name" value="G_PROTEIN_RECEP_F2_4"/>
    <property type="match status" value="1"/>
</dbReference>
<organism>
    <name type="scientific">Mus musculus</name>
    <name type="common">Mouse</name>
    <dbReference type="NCBI Taxonomy" id="10090"/>
    <lineage>
        <taxon>Eukaryota</taxon>
        <taxon>Metazoa</taxon>
        <taxon>Chordata</taxon>
        <taxon>Craniata</taxon>
        <taxon>Vertebrata</taxon>
        <taxon>Euteleostomi</taxon>
        <taxon>Mammalia</taxon>
        <taxon>Eutheria</taxon>
        <taxon>Euarchontoglires</taxon>
        <taxon>Glires</taxon>
        <taxon>Rodentia</taxon>
        <taxon>Myomorpha</taxon>
        <taxon>Muroidea</taxon>
        <taxon>Muridae</taxon>
        <taxon>Murinae</taxon>
        <taxon>Mus</taxon>
        <taxon>Mus</taxon>
    </lineage>
</organism>
<comment type="function">
    <text evidence="1">G protein-coupled receptor which specificity is determined by its interaction with receptor-activity-modifying proteins (RAMPs). Together with RAMP1, form the receptor complex for calcitonin-gene-related peptides CALCA/CGRP1 and CALCB/CGRP2. Together with RAMP2 or RAMP3, function as receptor complexes for adrenomedullin (ADM and ADM2). Ligand binding causes a conformation change that triggers signaling via guanine nucleotide-binding proteins (G proteins) and modulates the activity of downstream effectors. Activates cAMP-dependent pathway.</text>
</comment>
<comment type="subunit">
    <text evidence="1">Heterodimer of CALCRL and RAMP1; the receptor complex functions as CGRP receptor. Heterodimer of CALCRL and RAMP2 or CALCRL and RAMP3; the complexes function as adrenomedullin receptor.</text>
</comment>
<comment type="subcellular location">
    <subcellularLocation>
        <location evidence="1">Cell membrane</location>
        <topology evidence="1">Multi-pass membrane protein</topology>
    </subcellularLocation>
</comment>
<comment type="tissue specificity">
    <text evidence="3 4">Expressed predominantly in the lung, thymus, heart and brain.</text>
</comment>
<comment type="similarity">
    <text evidence="5">Belongs to the G-protein coupled receptor 2 family.</text>
</comment>
<protein>
    <recommendedName>
        <fullName>Calcitonin gene-related peptide type 1 receptor</fullName>
        <shortName>CGRP type 1 receptor</shortName>
    </recommendedName>
    <alternativeName>
        <fullName>Calcitonin receptor-like receptor</fullName>
    </alternativeName>
</protein>
<proteinExistence type="evidence at protein level"/>
<accession>Q9R1W5</accession>
<accession>Q9QXH8</accession>
<accession>Q9WUP2</accession>
<sequence>MDKKHILCFLVLLPLNMALISAESEEGVNQTDLGVTRNKIMTAQYECYQKIMQDPIQQAEGLYCNRTWDGWLCWNDVAAGTESMQYCPDYFQDFDPSEKVTKICDQDGHWFRHPDSNRTWTNYTLCNNSTHEKVKTALNLFYLTIIGHGLSIASLIISLIIFFYFKSLSCQRITLHKNLFFSFICNSIVTIIHLTAVANNQALVATNPVSCKVSQFIHLYLMGCNYFWMLCEGVYLHTLIVVAVFAEKQHLMWYYFLGWGFPLLPACIHAIARSLYYNDNCWISSDTHLLYIIHGPICAALLVNLFFLLNIVRVLITKLKVTHQVESNLYMKAVRATLILVPLLGIEFVLFPWRPEGKVAEEVYDYVMHILMHFQGLLVATIFCFFNGEVQAILRRNWNQYKIQFGNGFSHSDALRSASYTVSTISDMQGYSHDCPTEHLNGKSIQDIENVALKSENMYDLVM</sequence>
<name>CALRL_MOUSE</name>
<reference key="1">
    <citation type="journal article" date="2002" name="Neuropeptides">
        <title>Molecular cloning and characterization of mouse calcitonin gene-related peptide receptor.</title>
        <authorList>
            <person name="Miyauchi K."/>
            <person name="Tadotsu N."/>
            <person name="Hayashi T."/>
            <person name="Ono Y."/>
            <person name="Tokoyoda K."/>
            <person name="Tsujikawa K."/>
            <person name="Yamamoto H."/>
        </authorList>
    </citation>
    <scope>NUCLEOTIDE SEQUENCE [MRNA]</scope>
    <scope>TISSUE SPECIFICITY</scope>
    <source>
        <tissue>Spleen</tissue>
    </source>
</reference>
<reference key="2">
    <citation type="submission" date="1999-04" db="EMBL/GenBank/DDBJ databases">
        <title>Cloning and sequencing of mouse CGRP/adrenomedullin receptor subunits.</title>
        <authorList>
            <person name="Derst C."/>
            <person name="Preisig-Mueller R."/>
            <person name="Gerhardus J."/>
            <person name="Daut J."/>
        </authorList>
    </citation>
    <scope>NUCLEOTIDE SEQUENCE [MRNA]</scope>
</reference>
<reference key="3">
    <citation type="journal article" date="2000" name="Biochem. Biophys. Res. Commun.">
        <title>Decreased gene expression of adrenomedullin receptor in mouse lungs during sepsis.</title>
        <authorList>
            <person name="Ono Y."/>
            <person name="Okano I."/>
            <person name="Kojima M."/>
            <person name="Okada K."/>
            <person name="Kangawa K."/>
        </authorList>
    </citation>
    <scope>NUCLEOTIDE SEQUENCE [MRNA]</scope>
    <scope>TISSUE SPECIFICITY</scope>
    <source>
        <strain>C57BL/6J</strain>
        <tissue>Lung</tissue>
    </source>
</reference>
<reference key="4">
    <citation type="journal article" date="2010" name="Cell">
        <title>A tissue-specific atlas of mouse protein phosphorylation and expression.</title>
        <authorList>
            <person name="Huttlin E.L."/>
            <person name="Jedrychowski M.P."/>
            <person name="Elias J.E."/>
            <person name="Goswami T."/>
            <person name="Rad R."/>
            <person name="Beausoleil S.A."/>
            <person name="Villen J."/>
            <person name="Haas W."/>
            <person name="Sowa M.E."/>
            <person name="Gygi S.P."/>
        </authorList>
    </citation>
    <scope>PHOSPHORYLATION [LARGE SCALE ANALYSIS] AT SER-419 AND SER-444</scope>
    <scope>IDENTIFICATION BY MASS SPECTROMETRY [LARGE SCALE ANALYSIS]</scope>
    <source>
        <tissue>Kidney</tissue>
        <tissue>Lung</tissue>
        <tissue>Spleen</tissue>
    </source>
</reference>
<keyword id="KW-1003">Cell membrane</keyword>
<keyword id="KW-1015">Disulfide bond</keyword>
<keyword id="KW-0297">G-protein coupled receptor</keyword>
<keyword id="KW-0325">Glycoprotein</keyword>
<keyword id="KW-0472">Membrane</keyword>
<keyword id="KW-0597">Phosphoprotein</keyword>
<keyword id="KW-0675">Receptor</keyword>
<keyword id="KW-1185">Reference proteome</keyword>
<keyword id="KW-0732">Signal</keyword>
<keyword id="KW-0807">Transducer</keyword>
<keyword id="KW-0812">Transmembrane</keyword>
<keyword id="KW-1133">Transmembrane helix</keyword>